<gene>
    <name evidence="2" type="primary">trmB</name>
    <name type="ordered locus">VSAL_I0535</name>
</gene>
<name>TRMB_ALISL</name>
<organism>
    <name type="scientific">Aliivibrio salmonicida (strain LFI1238)</name>
    <name type="common">Vibrio salmonicida (strain LFI1238)</name>
    <dbReference type="NCBI Taxonomy" id="316275"/>
    <lineage>
        <taxon>Bacteria</taxon>
        <taxon>Pseudomonadati</taxon>
        <taxon>Pseudomonadota</taxon>
        <taxon>Gammaproteobacteria</taxon>
        <taxon>Vibrionales</taxon>
        <taxon>Vibrionaceae</taxon>
        <taxon>Aliivibrio</taxon>
    </lineage>
</organism>
<evidence type="ECO:0000250" key="1"/>
<evidence type="ECO:0000255" key="2">
    <source>
        <dbReference type="HAMAP-Rule" id="MF_01057"/>
    </source>
</evidence>
<sequence>MTEVTKNDFTEEGKIVRKIRSFVRREGRLTKGQEGAITECWSTMGIDFVEQVLDWNEVFGNNNPVVLEIGFGMGASLVEMAQKAPDVNFLGIEVHRPGVGACLAAAKEAGVTNLRVMCHDAVEVFESMIPDSSVTTLQLFFPDPWHKARHHKRRIVKAEFAEMIRPKLNAEGVFHMATDWENYAEHMIEVMNAAPGYENIATDGDYIPRPDERPLTKFEARGHRLGHGVWDIKFRRNA</sequence>
<dbReference type="EC" id="2.1.1.33" evidence="2"/>
<dbReference type="EMBL" id="FM178379">
    <property type="protein sequence ID" value="CAQ78220.1"/>
    <property type="molecule type" value="Genomic_DNA"/>
</dbReference>
<dbReference type="RefSeq" id="WP_012549344.1">
    <property type="nucleotide sequence ID" value="NC_011312.1"/>
</dbReference>
<dbReference type="SMR" id="B6EMU1"/>
<dbReference type="KEGG" id="vsa:VSAL_I0535"/>
<dbReference type="eggNOG" id="COG0220">
    <property type="taxonomic scope" value="Bacteria"/>
</dbReference>
<dbReference type="HOGENOM" id="CLU_050910_0_1_6"/>
<dbReference type="UniPathway" id="UPA00989"/>
<dbReference type="Proteomes" id="UP000001730">
    <property type="component" value="Chromosome 1"/>
</dbReference>
<dbReference type="GO" id="GO:0043527">
    <property type="term" value="C:tRNA methyltransferase complex"/>
    <property type="evidence" value="ECO:0007669"/>
    <property type="project" value="TreeGrafter"/>
</dbReference>
<dbReference type="GO" id="GO:0008176">
    <property type="term" value="F:tRNA (guanine(46)-N7)-methyltransferase activity"/>
    <property type="evidence" value="ECO:0007669"/>
    <property type="project" value="UniProtKB-UniRule"/>
</dbReference>
<dbReference type="FunFam" id="3.40.50.150:FF:000024">
    <property type="entry name" value="tRNA (guanine-N(7)-)-methyltransferase"/>
    <property type="match status" value="1"/>
</dbReference>
<dbReference type="Gene3D" id="3.40.50.150">
    <property type="entry name" value="Vaccinia Virus protein VP39"/>
    <property type="match status" value="1"/>
</dbReference>
<dbReference type="HAMAP" id="MF_01057">
    <property type="entry name" value="tRNA_methyltr_TrmB"/>
    <property type="match status" value="1"/>
</dbReference>
<dbReference type="InterPro" id="IPR029063">
    <property type="entry name" value="SAM-dependent_MTases_sf"/>
</dbReference>
<dbReference type="InterPro" id="IPR003358">
    <property type="entry name" value="tRNA_(Gua-N-7)_MeTrfase_Trmb"/>
</dbReference>
<dbReference type="InterPro" id="IPR055361">
    <property type="entry name" value="tRNA_methyltr_TrmB_bact"/>
</dbReference>
<dbReference type="NCBIfam" id="TIGR00091">
    <property type="entry name" value="tRNA (guanosine(46)-N7)-methyltransferase TrmB"/>
    <property type="match status" value="1"/>
</dbReference>
<dbReference type="PANTHER" id="PTHR23417">
    <property type="entry name" value="3-DEOXY-D-MANNO-OCTULOSONIC-ACID TRANSFERASE/TRNA GUANINE-N 7 - -METHYLTRANSFERASE"/>
    <property type="match status" value="1"/>
</dbReference>
<dbReference type="PANTHER" id="PTHR23417:SF14">
    <property type="entry name" value="PENTACOTRIPEPTIDE-REPEAT REGION OF PRORP DOMAIN-CONTAINING PROTEIN"/>
    <property type="match status" value="1"/>
</dbReference>
<dbReference type="Pfam" id="PF02390">
    <property type="entry name" value="Methyltransf_4"/>
    <property type="match status" value="1"/>
</dbReference>
<dbReference type="SUPFAM" id="SSF53335">
    <property type="entry name" value="S-adenosyl-L-methionine-dependent methyltransferases"/>
    <property type="match status" value="1"/>
</dbReference>
<dbReference type="PROSITE" id="PS51625">
    <property type="entry name" value="SAM_MT_TRMB"/>
    <property type="match status" value="1"/>
</dbReference>
<reference key="1">
    <citation type="journal article" date="2008" name="BMC Genomics">
        <title>The genome sequence of the fish pathogen Aliivibrio salmonicida strain LFI1238 shows extensive evidence of gene decay.</title>
        <authorList>
            <person name="Hjerde E."/>
            <person name="Lorentzen M.S."/>
            <person name="Holden M.T."/>
            <person name="Seeger K."/>
            <person name="Paulsen S."/>
            <person name="Bason N."/>
            <person name="Churcher C."/>
            <person name="Harris D."/>
            <person name="Norbertczak H."/>
            <person name="Quail M.A."/>
            <person name="Sanders S."/>
            <person name="Thurston S."/>
            <person name="Parkhill J."/>
            <person name="Willassen N.P."/>
            <person name="Thomson N.R."/>
        </authorList>
    </citation>
    <scope>NUCLEOTIDE SEQUENCE [LARGE SCALE GENOMIC DNA]</scope>
    <source>
        <strain>LFI1238</strain>
    </source>
</reference>
<feature type="chain" id="PRO_1000149641" description="tRNA (guanine-N(7)-)-methyltransferase">
    <location>
        <begin position="1"/>
        <end position="238"/>
    </location>
</feature>
<feature type="active site" evidence="1">
    <location>
        <position position="143"/>
    </location>
</feature>
<feature type="binding site" evidence="2">
    <location>
        <position position="68"/>
    </location>
    <ligand>
        <name>S-adenosyl-L-methionine</name>
        <dbReference type="ChEBI" id="CHEBI:59789"/>
    </ligand>
</feature>
<feature type="binding site" evidence="2">
    <location>
        <position position="93"/>
    </location>
    <ligand>
        <name>S-adenosyl-L-methionine</name>
        <dbReference type="ChEBI" id="CHEBI:59789"/>
    </ligand>
</feature>
<feature type="binding site" evidence="2">
    <location>
        <position position="120"/>
    </location>
    <ligand>
        <name>S-adenosyl-L-methionine</name>
        <dbReference type="ChEBI" id="CHEBI:59789"/>
    </ligand>
</feature>
<feature type="binding site" evidence="2">
    <location>
        <position position="143"/>
    </location>
    <ligand>
        <name>S-adenosyl-L-methionine</name>
        <dbReference type="ChEBI" id="CHEBI:59789"/>
    </ligand>
</feature>
<feature type="binding site" evidence="2">
    <location>
        <position position="147"/>
    </location>
    <ligand>
        <name>substrate</name>
    </ligand>
</feature>
<feature type="binding site" evidence="2">
    <location>
        <position position="179"/>
    </location>
    <ligand>
        <name>substrate</name>
    </ligand>
</feature>
<feature type="binding site" evidence="2">
    <location>
        <begin position="216"/>
        <end position="219"/>
    </location>
    <ligand>
        <name>substrate</name>
    </ligand>
</feature>
<protein>
    <recommendedName>
        <fullName evidence="2">tRNA (guanine-N(7)-)-methyltransferase</fullName>
        <ecNumber evidence="2">2.1.1.33</ecNumber>
    </recommendedName>
    <alternativeName>
        <fullName evidence="2">tRNA (guanine(46)-N(7))-methyltransferase</fullName>
    </alternativeName>
    <alternativeName>
        <fullName evidence="2">tRNA(m7G46)-methyltransferase</fullName>
    </alternativeName>
</protein>
<comment type="function">
    <text evidence="2">Catalyzes the formation of N(7)-methylguanine at position 46 (m7G46) in tRNA.</text>
</comment>
<comment type="catalytic activity">
    <reaction evidence="2">
        <text>guanosine(46) in tRNA + S-adenosyl-L-methionine = N(7)-methylguanosine(46) in tRNA + S-adenosyl-L-homocysteine</text>
        <dbReference type="Rhea" id="RHEA:42708"/>
        <dbReference type="Rhea" id="RHEA-COMP:10188"/>
        <dbReference type="Rhea" id="RHEA-COMP:10189"/>
        <dbReference type="ChEBI" id="CHEBI:57856"/>
        <dbReference type="ChEBI" id="CHEBI:59789"/>
        <dbReference type="ChEBI" id="CHEBI:74269"/>
        <dbReference type="ChEBI" id="CHEBI:74480"/>
        <dbReference type="EC" id="2.1.1.33"/>
    </reaction>
</comment>
<comment type="pathway">
    <text evidence="2">tRNA modification; N(7)-methylguanine-tRNA biosynthesis.</text>
</comment>
<comment type="similarity">
    <text evidence="2">Belongs to the class I-like SAM-binding methyltransferase superfamily. TrmB family.</text>
</comment>
<accession>B6EMU1</accession>
<proteinExistence type="inferred from homology"/>
<keyword id="KW-0489">Methyltransferase</keyword>
<keyword id="KW-0949">S-adenosyl-L-methionine</keyword>
<keyword id="KW-0808">Transferase</keyword>
<keyword id="KW-0819">tRNA processing</keyword>